<name>UEPB_HORVU</name>
<protein>
    <recommendedName>
        <fullName>Unknown endosperm protein B</fullName>
    </recommendedName>
</protein>
<organism>
    <name type="scientific">Hordeum vulgare</name>
    <name type="common">Barley</name>
    <dbReference type="NCBI Taxonomy" id="4513"/>
    <lineage>
        <taxon>Eukaryota</taxon>
        <taxon>Viridiplantae</taxon>
        <taxon>Streptophyta</taxon>
        <taxon>Embryophyta</taxon>
        <taxon>Tracheophyta</taxon>
        <taxon>Spermatophyta</taxon>
        <taxon>Magnoliopsida</taxon>
        <taxon>Liliopsida</taxon>
        <taxon>Poales</taxon>
        <taxon>Poaceae</taxon>
        <taxon>BOP clade</taxon>
        <taxon>Pooideae</taxon>
        <taxon>Triticodae</taxon>
        <taxon>Triticeae</taxon>
        <taxon>Hordeinae</taxon>
        <taxon>Hordeum</taxon>
    </lineage>
</organism>
<accession>P82937</accession>
<proteinExistence type="evidence at protein level"/>
<reference evidence="3" key="1">
    <citation type="journal article" date="2000" name="Electrophoresis">
        <title>Separation and characterization of basic barley seed proteins.</title>
        <authorList>
            <person name="Kristoffersen H.E."/>
            <person name="Flengsrud R."/>
        </authorList>
    </citation>
    <scope>PROTEIN SEQUENCE</scope>
    <source>
        <strain evidence="1">cv. Bomi</strain>
        <tissue evidence="1">Starchy endosperm</tissue>
    </source>
</reference>
<evidence type="ECO:0000269" key="1">
    <source>
    </source>
</evidence>
<evidence type="ECO:0000303" key="2">
    <source>
    </source>
</evidence>
<evidence type="ECO:0000305" key="3"/>
<sequence length="10" mass="1297">EKDCYHERDC</sequence>
<comment type="miscellaneous">
    <text evidence="1">On the 2D-gel the determined pI of this unknown protein is: 8.5-9.0, its MW is: 11.9 kDa.</text>
</comment>
<feature type="chain" id="PRO_0000278134" description="Unknown endosperm protein B">
    <location>
        <begin position="1"/>
        <end position="10" status="greater than"/>
    </location>
</feature>
<feature type="non-terminal residue" evidence="2">
    <location>
        <position position="10"/>
    </location>
</feature>
<keyword id="KW-0903">Direct protein sequencing</keyword>